<gene>
    <name evidence="1" type="primary">folD</name>
    <name type="ordered locus">TRQ2_1057</name>
</gene>
<dbReference type="EC" id="1.5.1.5" evidence="1"/>
<dbReference type="EC" id="3.5.4.9" evidence="1"/>
<dbReference type="EMBL" id="CP000969">
    <property type="protein sequence ID" value="ACB09404.1"/>
    <property type="molecule type" value="Genomic_DNA"/>
</dbReference>
<dbReference type="RefSeq" id="WP_012310914.1">
    <property type="nucleotide sequence ID" value="NC_010483.1"/>
</dbReference>
<dbReference type="SMR" id="B1LAQ6"/>
<dbReference type="KEGG" id="trq:TRQ2_1057"/>
<dbReference type="HOGENOM" id="CLU_034045_2_1_0"/>
<dbReference type="UniPathway" id="UPA00193"/>
<dbReference type="Proteomes" id="UP000001687">
    <property type="component" value="Chromosome"/>
</dbReference>
<dbReference type="GO" id="GO:0005829">
    <property type="term" value="C:cytosol"/>
    <property type="evidence" value="ECO:0007669"/>
    <property type="project" value="TreeGrafter"/>
</dbReference>
<dbReference type="GO" id="GO:0004477">
    <property type="term" value="F:methenyltetrahydrofolate cyclohydrolase activity"/>
    <property type="evidence" value="ECO:0007669"/>
    <property type="project" value="UniProtKB-UniRule"/>
</dbReference>
<dbReference type="GO" id="GO:0004488">
    <property type="term" value="F:methylenetetrahydrofolate dehydrogenase (NADP+) activity"/>
    <property type="evidence" value="ECO:0007669"/>
    <property type="project" value="UniProtKB-UniRule"/>
</dbReference>
<dbReference type="GO" id="GO:0000105">
    <property type="term" value="P:L-histidine biosynthetic process"/>
    <property type="evidence" value="ECO:0007669"/>
    <property type="project" value="UniProtKB-KW"/>
</dbReference>
<dbReference type="GO" id="GO:0009086">
    <property type="term" value="P:methionine biosynthetic process"/>
    <property type="evidence" value="ECO:0007669"/>
    <property type="project" value="UniProtKB-KW"/>
</dbReference>
<dbReference type="GO" id="GO:0006164">
    <property type="term" value="P:purine nucleotide biosynthetic process"/>
    <property type="evidence" value="ECO:0007669"/>
    <property type="project" value="UniProtKB-KW"/>
</dbReference>
<dbReference type="GO" id="GO:0035999">
    <property type="term" value="P:tetrahydrofolate interconversion"/>
    <property type="evidence" value="ECO:0007669"/>
    <property type="project" value="UniProtKB-UniRule"/>
</dbReference>
<dbReference type="CDD" id="cd01080">
    <property type="entry name" value="NAD_bind_m-THF_DH_Cyclohyd"/>
    <property type="match status" value="1"/>
</dbReference>
<dbReference type="Gene3D" id="3.40.50.10860">
    <property type="entry name" value="Leucine Dehydrogenase, chain A, domain 1"/>
    <property type="match status" value="1"/>
</dbReference>
<dbReference type="Gene3D" id="3.40.50.720">
    <property type="entry name" value="NAD(P)-binding Rossmann-like Domain"/>
    <property type="match status" value="1"/>
</dbReference>
<dbReference type="HAMAP" id="MF_01576">
    <property type="entry name" value="THF_DHG_CYH"/>
    <property type="match status" value="1"/>
</dbReference>
<dbReference type="InterPro" id="IPR046346">
    <property type="entry name" value="Aminoacid_DH-like_N_sf"/>
</dbReference>
<dbReference type="InterPro" id="IPR036291">
    <property type="entry name" value="NAD(P)-bd_dom_sf"/>
</dbReference>
<dbReference type="InterPro" id="IPR000672">
    <property type="entry name" value="THF_DH/CycHdrlase"/>
</dbReference>
<dbReference type="InterPro" id="IPR020630">
    <property type="entry name" value="THF_DH/CycHdrlase_cat_dom"/>
</dbReference>
<dbReference type="InterPro" id="IPR020631">
    <property type="entry name" value="THF_DH/CycHdrlase_NAD-bd_dom"/>
</dbReference>
<dbReference type="PANTHER" id="PTHR48099:SF5">
    <property type="entry name" value="C-1-TETRAHYDROFOLATE SYNTHASE, CYTOPLASMIC"/>
    <property type="match status" value="1"/>
</dbReference>
<dbReference type="PANTHER" id="PTHR48099">
    <property type="entry name" value="C-1-TETRAHYDROFOLATE SYNTHASE, CYTOPLASMIC-RELATED"/>
    <property type="match status" value="1"/>
</dbReference>
<dbReference type="Pfam" id="PF00763">
    <property type="entry name" value="THF_DHG_CYH"/>
    <property type="match status" value="1"/>
</dbReference>
<dbReference type="Pfam" id="PF02882">
    <property type="entry name" value="THF_DHG_CYH_C"/>
    <property type="match status" value="1"/>
</dbReference>
<dbReference type="PRINTS" id="PR00085">
    <property type="entry name" value="THFDHDRGNASE"/>
</dbReference>
<dbReference type="SUPFAM" id="SSF53223">
    <property type="entry name" value="Aminoacid dehydrogenase-like, N-terminal domain"/>
    <property type="match status" value="1"/>
</dbReference>
<dbReference type="SUPFAM" id="SSF51735">
    <property type="entry name" value="NAD(P)-binding Rossmann-fold domains"/>
    <property type="match status" value="1"/>
</dbReference>
<sequence>MWIDCRTIARSIEERTKERVEKLGFTPKLVSVACTDDPSALSYLKSQRKKAEKLGIAFEILNVSPEEIVSTLKKLGSDESVNGVFVARPFPPSFDEKEILSSVPVEKDVEGVNPANLGLLLYDEEIFPPCTAEAAVRILERETNLSGKRVTVVGRSVTVGKPLALMLLKKGRDATVTVCHSRTVNLEEITKNSDIVVVAVGRAHFLKKNMVKEGAIVIDVGINYVDGKLQGDVDPSVEEIARVTPVPGGVGQVTTALLFEHVVRAAERQRK</sequence>
<feature type="chain" id="PRO_1000147533" description="Bifunctional protein FolD">
    <location>
        <begin position="1"/>
        <end position="271"/>
    </location>
</feature>
<feature type="binding site" evidence="1">
    <location>
        <begin position="154"/>
        <end position="156"/>
    </location>
    <ligand>
        <name>NADP(+)</name>
        <dbReference type="ChEBI" id="CHEBI:58349"/>
    </ligand>
</feature>
<feature type="binding site" evidence="1">
    <location>
        <position position="181"/>
    </location>
    <ligand>
        <name>NADP(+)</name>
        <dbReference type="ChEBI" id="CHEBI:58349"/>
    </ligand>
</feature>
<feature type="binding site" evidence="1">
    <location>
        <position position="222"/>
    </location>
    <ligand>
        <name>NADP(+)</name>
        <dbReference type="ChEBI" id="CHEBI:58349"/>
    </ligand>
</feature>
<reference key="1">
    <citation type="journal article" date="2011" name="J. Bacteriol.">
        <title>Genome sequence of Thermotoga sp. strain RQ2, a hyperthermophilic bacterium isolated from a geothermally heated region of the seafloor near Ribeira Quente, the Azores.</title>
        <authorList>
            <person name="Swithers K.S."/>
            <person name="DiPippo J.L."/>
            <person name="Bruce D.C."/>
            <person name="Detter C."/>
            <person name="Tapia R."/>
            <person name="Han S."/>
            <person name="Saunders E."/>
            <person name="Goodwin L.A."/>
            <person name="Han J."/>
            <person name="Woyke T."/>
            <person name="Pitluck S."/>
            <person name="Pennacchio L."/>
            <person name="Nolan M."/>
            <person name="Mikhailova N."/>
            <person name="Lykidis A."/>
            <person name="Land M.L."/>
            <person name="Brettin T."/>
            <person name="Stetter K.O."/>
            <person name="Nelson K.E."/>
            <person name="Gogarten J.P."/>
            <person name="Noll K.M."/>
        </authorList>
    </citation>
    <scope>NUCLEOTIDE SEQUENCE [LARGE SCALE GENOMIC DNA]</scope>
    <source>
        <strain>RQ2</strain>
    </source>
</reference>
<keyword id="KW-0028">Amino-acid biosynthesis</keyword>
<keyword id="KW-0368">Histidine biosynthesis</keyword>
<keyword id="KW-0378">Hydrolase</keyword>
<keyword id="KW-0486">Methionine biosynthesis</keyword>
<keyword id="KW-0511">Multifunctional enzyme</keyword>
<keyword id="KW-0521">NADP</keyword>
<keyword id="KW-0554">One-carbon metabolism</keyword>
<keyword id="KW-0560">Oxidoreductase</keyword>
<keyword id="KW-0658">Purine biosynthesis</keyword>
<evidence type="ECO:0000255" key="1">
    <source>
        <dbReference type="HAMAP-Rule" id="MF_01576"/>
    </source>
</evidence>
<protein>
    <recommendedName>
        <fullName evidence="1">Bifunctional protein FolD</fullName>
    </recommendedName>
    <domain>
        <recommendedName>
            <fullName evidence="1">Methylenetetrahydrofolate dehydrogenase</fullName>
            <ecNumber evidence="1">1.5.1.5</ecNumber>
        </recommendedName>
    </domain>
    <domain>
        <recommendedName>
            <fullName evidence="1">Methenyltetrahydrofolate cyclohydrolase</fullName>
            <ecNumber evidence="1">3.5.4.9</ecNumber>
        </recommendedName>
    </domain>
</protein>
<name>FOLD_THESQ</name>
<comment type="function">
    <text evidence="1">Catalyzes the oxidation of 5,10-methylenetetrahydrofolate to 5,10-methenyltetrahydrofolate and then the hydrolysis of 5,10-methenyltetrahydrofolate to 10-formyltetrahydrofolate.</text>
</comment>
<comment type="catalytic activity">
    <reaction evidence="1">
        <text>(6R)-5,10-methylene-5,6,7,8-tetrahydrofolate + NADP(+) = (6R)-5,10-methenyltetrahydrofolate + NADPH</text>
        <dbReference type="Rhea" id="RHEA:22812"/>
        <dbReference type="ChEBI" id="CHEBI:15636"/>
        <dbReference type="ChEBI" id="CHEBI:57455"/>
        <dbReference type="ChEBI" id="CHEBI:57783"/>
        <dbReference type="ChEBI" id="CHEBI:58349"/>
        <dbReference type="EC" id="1.5.1.5"/>
    </reaction>
</comment>
<comment type="catalytic activity">
    <reaction evidence="1">
        <text>(6R)-5,10-methenyltetrahydrofolate + H2O = (6R)-10-formyltetrahydrofolate + H(+)</text>
        <dbReference type="Rhea" id="RHEA:23700"/>
        <dbReference type="ChEBI" id="CHEBI:15377"/>
        <dbReference type="ChEBI" id="CHEBI:15378"/>
        <dbReference type="ChEBI" id="CHEBI:57455"/>
        <dbReference type="ChEBI" id="CHEBI:195366"/>
        <dbReference type="EC" id="3.5.4.9"/>
    </reaction>
</comment>
<comment type="pathway">
    <text evidence="1">One-carbon metabolism; tetrahydrofolate interconversion.</text>
</comment>
<comment type="subunit">
    <text evidence="1">Homodimer.</text>
</comment>
<comment type="similarity">
    <text evidence="1">Belongs to the tetrahydrofolate dehydrogenase/cyclohydrolase family.</text>
</comment>
<accession>B1LAQ6</accession>
<organism>
    <name type="scientific">Thermotoga sp. (strain RQ2)</name>
    <dbReference type="NCBI Taxonomy" id="126740"/>
    <lineage>
        <taxon>Bacteria</taxon>
        <taxon>Thermotogati</taxon>
        <taxon>Thermotogota</taxon>
        <taxon>Thermotogae</taxon>
        <taxon>Thermotogales</taxon>
        <taxon>Thermotogaceae</taxon>
        <taxon>Thermotoga</taxon>
    </lineage>
</organism>
<proteinExistence type="inferred from homology"/>